<dbReference type="EC" id="5.3.3.2" evidence="1"/>
<dbReference type="EMBL" id="BA000028">
    <property type="protein sequence ID" value="BAC12493.1"/>
    <property type="molecule type" value="Genomic_DNA"/>
</dbReference>
<dbReference type="RefSeq" id="WP_011064940.1">
    <property type="nucleotide sequence ID" value="NC_004193.1"/>
</dbReference>
<dbReference type="SMR" id="Q8EST0"/>
<dbReference type="STRING" id="221109.gene:10732741"/>
<dbReference type="KEGG" id="oih:OB0537"/>
<dbReference type="eggNOG" id="COG1304">
    <property type="taxonomic scope" value="Bacteria"/>
</dbReference>
<dbReference type="HOGENOM" id="CLU_065515_1_0_9"/>
<dbReference type="OrthoDB" id="9795032at2"/>
<dbReference type="PhylomeDB" id="Q8EST0"/>
<dbReference type="Proteomes" id="UP000000822">
    <property type="component" value="Chromosome"/>
</dbReference>
<dbReference type="GO" id="GO:0005737">
    <property type="term" value="C:cytoplasm"/>
    <property type="evidence" value="ECO:0007669"/>
    <property type="project" value="UniProtKB-SubCell"/>
</dbReference>
<dbReference type="GO" id="GO:0010181">
    <property type="term" value="F:FMN binding"/>
    <property type="evidence" value="ECO:0007669"/>
    <property type="project" value="UniProtKB-UniRule"/>
</dbReference>
<dbReference type="GO" id="GO:0004452">
    <property type="term" value="F:isopentenyl-diphosphate delta-isomerase activity"/>
    <property type="evidence" value="ECO:0007669"/>
    <property type="project" value="UniProtKB-UniRule"/>
</dbReference>
<dbReference type="GO" id="GO:0000287">
    <property type="term" value="F:magnesium ion binding"/>
    <property type="evidence" value="ECO:0007669"/>
    <property type="project" value="UniProtKB-UniRule"/>
</dbReference>
<dbReference type="GO" id="GO:0070402">
    <property type="term" value="F:NADPH binding"/>
    <property type="evidence" value="ECO:0007669"/>
    <property type="project" value="UniProtKB-UniRule"/>
</dbReference>
<dbReference type="GO" id="GO:0016491">
    <property type="term" value="F:oxidoreductase activity"/>
    <property type="evidence" value="ECO:0007669"/>
    <property type="project" value="InterPro"/>
</dbReference>
<dbReference type="GO" id="GO:0008299">
    <property type="term" value="P:isoprenoid biosynthetic process"/>
    <property type="evidence" value="ECO:0007669"/>
    <property type="project" value="UniProtKB-UniRule"/>
</dbReference>
<dbReference type="CDD" id="cd02811">
    <property type="entry name" value="IDI-2_FMN"/>
    <property type="match status" value="1"/>
</dbReference>
<dbReference type="Gene3D" id="3.20.20.70">
    <property type="entry name" value="Aldolase class I"/>
    <property type="match status" value="1"/>
</dbReference>
<dbReference type="HAMAP" id="MF_00354">
    <property type="entry name" value="Idi_2"/>
    <property type="match status" value="1"/>
</dbReference>
<dbReference type="InterPro" id="IPR013785">
    <property type="entry name" value="Aldolase_TIM"/>
</dbReference>
<dbReference type="InterPro" id="IPR000262">
    <property type="entry name" value="FMN-dep_DH"/>
</dbReference>
<dbReference type="InterPro" id="IPR011179">
    <property type="entry name" value="IPdP_isomerase"/>
</dbReference>
<dbReference type="NCBIfam" id="TIGR02151">
    <property type="entry name" value="IPP_isom_2"/>
    <property type="match status" value="1"/>
</dbReference>
<dbReference type="PANTHER" id="PTHR43665">
    <property type="entry name" value="ISOPENTENYL-DIPHOSPHATE DELTA-ISOMERASE"/>
    <property type="match status" value="1"/>
</dbReference>
<dbReference type="PANTHER" id="PTHR43665:SF1">
    <property type="entry name" value="ISOPENTENYL-DIPHOSPHATE DELTA-ISOMERASE"/>
    <property type="match status" value="1"/>
</dbReference>
<dbReference type="Pfam" id="PF01070">
    <property type="entry name" value="FMN_dh"/>
    <property type="match status" value="1"/>
</dbReference>
<dbReference type="PIRSF" id="PIRSF003314">
    <property type="entry name" value="IPP_isomerase"/>
    <property type="match status" value="1"/>
</dbReference>
<dbReference type="SMART" id="SM01240">
    <property type="entry name" value="IMPDH"/>
    <property type="match status" value="1"/>
</dbReference>
<dbReference type="SUPFAM" id="SSF51395">
    <property type="entry name" value="FMN-linked oxidoreductases"/>
    <property type="match status" value="1"/>
</dbReference>
<accession>Q8EST0</accession>
<protein>
    <recommendedName>
        <fullName evidence="1">Isopentenyl-diphosphate delta-isomerase</fullName>
        <shortName evidence="1">IPP isomerase</shortName>
        <ecNumber evidence="1">5.3.3.2</ecNumber>
    </recommendedName>
    <alternativeName>
        <fullName evidence="1">Isopentenyl diphosphate:dimethylallyl diphosphate isomerase</fullName>
    </alternativeName>
    <alternativeName>
        <fullName evidence="1">Isopentenyl pyrophosphate isomerase</fullName>
    </alternativeName>
    <alternativeName>
        <fullName evidence="1">Type 2 isopentenyl diphosphate isomerase</fullName>
        <shortName evidence="1">IDI-2</shortName>
    </alternativeName>
</protein>
<reference key="1">
    <citation type="journal article" date="2002" name="Nucleic Acids Res.">
        <title>Genome sequence of Oceanobacillus iheyensis isolated from the Iheya Ridge and its unexpected adaptive capabilities to extreme environments.</title>
        <authorList>
            <person name="Takami H."/>
            <person name="Takaki Y."/>
            <person name="Uchiyama I."/>
        </authorList>
    </citation>
    <scope>NUCLEOTIDE SEQUENCE [LARGE SCALE GENOMIC DNA]</scope>
    <source>
        <strain>DSM 14371 / CIP 107618 / JCM 11309 / KCTC 3954 / HTE831</strain>
    </source>
</reference>
<name>IDI2_OCEIH</name>
<proteinExistence type="inferred from homology"/>
<gene>
    <name evidence="1" type="primary">fni</name>
    <name type="ordered locus">OB0537</name>
</gene>
<sequence length="349" mass="37565">MEKGINQRKTEHIRLCLTGNVEGVNKSTGLEGINFIHNALPEIDFADISLESSFLGKQLKAPFLVSSMTGGSELATKINQNLAIAAEEKGWALAIGSTRAFLESDQHKESFLIRNQAPTAPLIVNIGAVQLNYGYGPEECQRIIDKTNADSIVLHLNSLQEAVQDGGDLNFKDLLPKIEQVCKQVKAPVGVKEVGFGIDGEVARRLYDAGISYIDVAGAGGTSWSQVEKLRSKDPLNKAAAEAFNNWGTPTKDCLVSVRGELPEAPLVASGGMKTGVDAAKAITIGADVVGFARHLLKAAMETPEDVIRTMEQLELELKMTMFGIGAVNLEELKNTSRVSIMGQSLMDK</sequence>
<keyword id="KW-0963">Cytoplasm</keyword>
<keyword id="KW-0285">Flavoprotein</keyword>
<keyword id="KW-0288">FMN</keyword>
<keyword id="KW-0413">Isomerase</keyword>
<keyword id="KW-0414">Isoprene biosynthesis</keyword>
<keyword id="KW-0460">Magnesium</keyword>
<keyword id="KW-0479">Metal-binding</keyword>
<keyword id="KW-0521">NADP</keyword>
<keyword id="KW-1185">Reference proteome</keyword>
<comment type="function">
    <text evidence="1">Involved in the biosynthesis of isoprenoids. Catalyzes the 1,3-allylic rearrangement of the homoallylic substrate isopentenyl (IPP) to its allylic isomer, dimethylallyl diphosphate (DMAPP).</text>
</comment>
<comment type="catalytic activity">
    <reaction evidence="1">
        <text>isopentenyl diphosphate = dimethylallyl diphosphate</text>
        <dbReference type="Rhea" id="RHEA:23284"/>
        <dbReference type="ChEBI" id="CHEBI:57623"/>
        <dbReference type="ChEBI" id="CHEBI:128769"/>
        <dbReference type="EC" id="5.3.3.2"/>
    </reaction>
</comment>
<comment type="cofactor">
    <cofactor evidence="1">
        <name>FMN</name>
        <dbReference type="ChEBI" id="CHEBI:58210"/>
    </cofactor>
</comment>
<comment type="cofactor">
    <cofactor evidence="1">
        <name>NADPH</name>
        <dbReference type="ChEBI" id="CHEBI:57783"/>
    </cofactor>
</comment>
<comment type="cofactor">
    <cofactor evidence="1">
        <name>Mg(2+)</name>
        <dbReference type="ChEBI" id="CHEBI:18420"/>
    </cofactor>
</comment>
<comment type="subunit">
    <text evidence="1">Homooctamer. Dimer of tetramers.</text>
</comment>
<comment type="subcellular location">
    <subcellularLocation>
        <location evidence="1">Cytoplasm</location>
    </subcellularLocation>
</comment>
<comment type="similarity">
    <text evidence="1">Belongs to the IPP isomerase type 2 family.</text>
</comment>
<feature type="chain" id="PRO_0000134415" description="Isopentenyl-diphosphate delta-isomerase">
    <location>
        <begin position="1"/>
        <end position="349"/>
    </location>
</feature>
<feature type="binding site" evidence="1">
    <location>
        <begin position="8"/>
        <end position="9"/>
    </location>
    <ligand>
        <name>substrate</name>
    </ligand>
</feature>
<feature type="binding site" evidence="1">
    <location>
        <position position="66"/>
    </location>
    <ligand>
        <name>FMN</name>
        <dbReference type="ChEBI" id="CHEBI:58210"/>
    </ligand>
</feature>
<feature type="binding site" evidence="1">
    <location>
        <begin position="67"/>
        <end position="69"/>
    </location>
    <ligand>
        <name>FMN</name>
        <dbReference type="ChEBI" id="CHEBI:58210"/>
    </ligand>
</feature>
<feature type="binding site" evidence="1">
    <location>
        <begin position="97"/>
        <end position="99"/>
    </location>
    <ligand>
        <name>substrate</name>
    </ligand>
</feature>
<feature type="binding site" evidence="1">
    <location>
        <position position="97"/>
    </location>
    <ligand>
        <name>FMN</name>
        <dbReference type="ChEBI" id="CHEBI:58210"/>
    </ligand>
</feature>
<feature type="binding site" evidence="1">
    <location>
        <position position="125"/>
    </location>
    <ligand>
        <name>FMN</name>
        <dbReference type="ChEBI" id="CHEBI:58210"/>
    </ligand>
</feature>
<feature type="binding site" evidence="1">
    <location>
        <position position="160"/>
    </location>
    <ligand>
        <name>substrate</name>
    </ligand>
</feature>
<feature type="binding site" evidence="1">
    <location>
        <position position="161"/>
    </location>
    <ligand>
        <name>Mg(2+)</name>
        <dbReference type="ChEBI" id="CHEBI:18420"/>
    </ligand>
</feature>
<feature type="binding site" evidence="1">
    <location>
        <position position="192"/>
    </location>
    <ligand>
        <name>FMN</name>
        <dbReference type="ChEBI" id="CHEBI:58210"/>
    </ligand>
</feature>
<feature type="binding site" evidence="1">
    <location>
        <position position="222"/>
    </location>
    <ligand>
        <name>FMN</name>
        <dbReference type="ChEBI" id="CHEBI:58210"/>
    </ligand>
</feature>
<feature type="binding site" evidence="1">
    <location>
        <begin position="272"/>
        <end position="274"/>
    </location>
    <ligand>
        <name>FMN</name>
        <dbReference type="ChEBI" id="CHEBI:58210"/>
    </ligand>
</feature>
<feature type="binding site" evidence="1">
    <location>
        <begin position="293"/>
        <end position="294"/>
    </location>
    <ligand>
        <name>FMN</name>
        <dbReference type="ChEBI" id="CHEBI:58210"/>
    </ligand>
</feature>
<organism>
    <name type="scientific">Oceanobacillus iheyensis (strain DSM 14371 / CIP 107618 / JCM 11309 / KCTC 3954 / HTE831)</name>
    <dbReference type="NCBI Taxonomy" id="221109"/>
    <lineage>
        <taxon>Bacteria</taxon>
        <taxon>Bacillati</taxon>
        <taxon>Bacillota</taxon>
        <taxon>Bacilli</taxon>
        <taxon>Bacillales</taxon>
        <taxon>Bacillaceae</taxon>
        <taxon>Oceanobacillus</taxon>
    </lineage>
</organism>
<evidence type="ECO:0000255" key="1">
    <source>
        <dbReference type="HAMAP-Rule" id="MF_00354"/>
    </source>
</evidence>